<accession>C0Z7H6</accession>
<sequence length="246" mass="26515">MNAFLHAISFFTRIPVPWLRPSEEAWRKSVNWYPAVGLVIGLLLWGVHQAGLVLFSPWIAAILTLIAWVYVTGGLHMDGWMDLADGLGSSRPREQILAIMKDSRVGAMGVLAAIMLLLIKAGAVAELAHPGWGSFLIVAPVAARTHVLLSIKLWPYLSADKGIGKGISSGLSVSSIIVSYIIVFAAGWYLGGLQVMTAIFLSLLFALWFSRSVAKKLGGLNGDCYGAVIESSEAVVLLVLVGSWWL</sequence>
<organism>
    <name type="scientific">Brevibacillus brevis (strain 47 / JCM 6285 / NBRC 100599)</name>
    <dbReference type="NCBI Taxonomy" id="358681"/>
    <lineage>
        <taxon>Bacteria</taxon>
        <taxon>Bacillati</taxon>
        <taxon>Bacillota</taxon>
        <taxon>Bacilli</taxon>
        <taxon>Bacillales</taxon>
        <taxon>Paenibacillaceae</taxon>
        <taxon>Brevibacillus</taxon>
    </lineage>
</organism>
<dbReference type="EC" id="2.7.8.26" evidence="1"/>
<dbReference type="EMBL" id="AP008955">
    <property type="protein sequence ID" value="BAH42219.1"/>
    <property type="molecule type" value="Genomic_DNA"/>
</dbReference>
<dbReference type="RefSeq" id="WP_012684970.1">
    <property type="nucleotide sequence ID" value="NC_012491.1"/>
</dbReference>
<dbReference type="STRING" id="358681.BBR47_12420"/>
<dbReference type="KEGG" id="bbe:BBR47_12420"/>
<dbReference type="eggNOG" id="COG0368">
    <property type="taxonomic scope" value="Bacteria"/>
</dbReference>
<dbReference type="HOGENOM" id="CLU_057426_3_1_9"/>
<dbReference type="UniPathway" id="UPA00148">
    <property type="reaction ID" value="UER00238"/>
</dbReference>
<dbReference type="Proteomes" id="UP000001877">
    <property type="component" value="Chromosome"/>
</dbReference>
<dbReference type="GO" id="GO:0005886">
    <property type="term" value="C:plasma membrane"/>
    <property type="evidence" value="ECO:0007669"/>
    <property type="project" value="UniProtKB-SubCell"/>
</dbReference>
<dbReference type="GO" id="GO:0051073">
    <property type="term" value="F:adenosylcobinamide-GDP ribazoletransferase activity"/>
    <property type="evidence" value="ECO:0007669"/>
    <property type="project" value="UniProtKB-UniRule"/>
</dbReference>
<dbReference type="GO" id="GO:0008818">
    <property type="term" value="F:cobalamin 5'-phosphate synthase activity"/>
    <property type="evidence" value="ECO:0007669"/>
    <property type="project" value="UniProtKB-UniRule"/>
</dbReference>
<dbReference type="GO" id="GO:0009236">
    <property type="term" value="P:cobalamin biosynthetic process"/>
    <property type="evidence" value="ECO:0007669"/>
    <property type="project" value="UniProtKB-UniRule"/>
</dbReference>
<dbReference type="HAMAP" id="MF_00719">
    <property type="entry name" value="CobS"/>
    <property type="match status" value="1"/>
</dbReference>
<dbReference type="InterPro" id="IPR003805">
    <property type="entry name" value="CobS"/>
</dbReference>
<dbReference type="NCBIfam" id="TIGR00317">
    <property type="entry name" value="cobS"/>
    <property type="match status" value="1"/>
</dbReference>
<dbReference type="PANTHER" id="PTHR34148">
    <property type="entry name" value="ADENOSYLCOBINAMIDE-GDP RIBAZOLETRANSFERASE"/>
    <property type="match status" value="1"/>
</dbReference>
<dbReference type="PANTHER" id="PTHR34148:SF1">
    <property type="entry name" value="ADENOSYLCOBINAMIDE-GDP RIBAZOLETRANSFERASE"/>
    <property type="match status" value="1"/>
</dbReference>
<dbReference type="Pfam" id="PF02654">
    <property type="entry name" value="CobS"/>
    <property type="match status" value="1"/>
</dbReference>
<feature type="chain" id="PRO_1000212687" description="Adenosylcobinamide-GDP ribazoletransferase">
    <location>
        <begin position="1"/>
        <end position="246"/>
    </location>
</feature>
<feature type="transmembrane region" description="Helical" evidence="1">
    <location>
        <begin position="30"/>
        <end position="50"/>
    </location>
</feature>
<feature type="transmembrane region" description="Helical" evidence="1">
    <location>
        <begin position="51"/>
        <end position="71"/>
    </location>
</feature>
<feature type="transmembrane region" description="Helical" evidence="1">
    <location>
        <begin position="105"/>
        <end position="125"/>
    </location>
</feature>
<feature type="transmembrane region" description="Helical" evidence="1">
    <location>
        <begin position="131"/>
        <end position="151"/>
    </location>
</feature>
<feature type="transmembrane region" description="Helical" evidence="1">
    <location>
        <begin position="167"/>
        <end position="189"/>
    </location>
</feature>
<feature type="transmembrane region" description="Helical" evidence="1">
    <location>
        <begin position="193"/>
        <end position="210"/>
    </location>
</feature>
<feature type="transmembrane region" description="Helical" evidence="1">
    <location>
        <begin position="226"/>
        <end position="246"/>
    </location>
</feature>
<name>COBS_BREBN</name>
<comment type="function">
    <text evidence="1">Joins adenosylcobinamide-GDP and alpha-ribazole to generate adenosylcobalamin (Ado-cobalamin). Also synthesizes adenosylcobalamin 5'-phosphate from adenosylcobinamide-GDP and alpha-ribazole 5'-phosphate.</text>
</comment>
<comment type="catalytic activity">
    <reaction evidence="1">
        <text>alpha-ribazole + adenosylcob(III)inamide-GDP = adenosylcob(III)alamin + GMP + H(+)</text>
        <dbReference type="Rhea" id="RHEA:16049"/>
        <dbReference type="ChEBI" id="CHEBI:10329"/>
        <dbReference type="ChEBI" id="CHEBI:15378"/>
        <dbReference type="ChEBI" id="CHEBI:18408"/>
        <dbReference type="ChEBI" id="CHEBI:58115"/>
        <dbReference type="ChEBI" id="CHEBI:60487"/>
        <dbReference type="EC" id="2.7.8.26"/>
    </reaction>
</comment>
<comment type="catalytic activity">
    <reaction evidence="1">
        <text>alpha-ribazole 5'-phosphate + adenosylcob(III)inamide-GDP = adenosylcob(III)alamin 5'-phosphate + GMP + H(+)</text>
        <dbReference type="Rhea" id="RHEA:23560"/>
        <dbReference type="ChEBI" id="CHEBI:15378"/>
        <dbReference type="ChEBI" id="CHEBI:57918"/>
        <dbReference type="ChEBI" id="CHEBI:58115"/>
        <dbReference type="ChEBI" id="CHEBI:60487"/>
        <dbReference type="ChEBI" id="CHEBI:60493"/>
        <dbReference type="EC" id="2.7.8.26"/>
    </reaction>
</comment>
<comment type="cofactor">
    <cofactor evidence="1">
        <name>Mg(2+)</name>
        <dbReference type="ChEBI" id="CHEBI:18420"/>
    </cofactor>
</comment>
<comment type="pathway">
    <text evidence="1">Cofactor biosynthesis; adenosylcobalamin biosynthesis; adenosylcobalamin from cob(II)yrinate a,c-diamide: step 7/7.</text>
</comment>
<comment type="subcellular location">
    <subcellularLocation>
        <location evidence="1">Cell membrane</location>
        <topology evidence="1">Multi-pass membrane protein</topology>
    </subcellularLocation>
</comment>
<comment type="similarity">
    <text evidence="1">Belongs to the CobS family.</text>
</comment>
<proteinExistence type="inferred from homology"/>
<keyword id="KW-1003">Cell membrane</keyword>
<keyword id="KW-0169">Cobalamin biosynthesis</keyword>
<keyword id="KW-0460">Magnesium</keyword>
<keyword id="KW-0472">Membrane</keyword>
<keyword id="KW-1185">Reference proteome</keyword>
<keyword id="KW-0808">Transferase</keyword>
<keyword id="KW-0812">Transmembrane</keyword>
<keyword id="KW-1133">Transmembrane helix</keyword>
<gene>
    <name evidence="1" type="primary">cobS</name>
    <name type="ordered locus">BBR47_12420</name>
</gene>
<reference key="1">
    <citation type="submission" date="2005-03" db="EMBL/GenBank/DDBJ databases">
        <title>Brevibacillus brevis strain 47, complete genome.</title>
        <authorList>
            <person name="Hosoyama A."/>
            <person name="Yamada R."/>
            <person name="Hongo Y."/>
            <person name="Terui Y."/>
            <person name="Ankai A."/>
            <person name="Masuyama W."/>
            <person name="Sekiguchi M."/>
            <person name="Takeda T."/>
            <person name="Asano K."/>
            <person name="Ohji S."/>
            <person name="Ichikawa N."/>
            <person name="Narita S."/>
            <person name="Aoki N."/>
            <person name="Miura H."/>
            <person name="Matsushita S."/>
            <person name="Sekigawa T."/>
            <person name="Yamagata H."/>
            <person name="Yoshikawa H."/>
            <person name="Udaka S."/>
            <person name="Tanikawa S."/>
            <person name="Fujita N."/>
        </authorList>
    </citation>
    <scope>NUCLEOTIDE SEQUENCE [LARGE SCALE GENOMIC DNA]</scope>
    <source>
        <strain>47 / JCM 6285 / NBRC 100599</strain>
    </source>
</reference>
<evidence type="ECO:0000255" key="1">
    <source>
        <dbReference type="HAMAP-Rule" id="MF_00719"/>
    </source>
</evidence>
<protein>
    <recommendedName>
        <fullName evidence="1">Adenosylcobinamide-GDP ribazoletransferase</fullName>
        <ecNumber evidence="1">2.7.8.26</ecNumber>
    </recommendedName>
    <alternativeName>
        <fullName evidence="1">Cobalamin synthase</fullName>
    </alternativeName>
    <alternativeName>
        <fullName evidence="1">Cobalamin-5'-phosphate synthase</fullName>
    </alternativeName>
</protein>